<name>DNLJ1_STRCO</name>
<evidence type="ECO:0000255" key="1">
    <source>
        <dbReference type="HAMAP-Rule" id="MF_01588"/>
    </source>
</evidence>
<evidence type="ECO:0000256" key="2">
    <source>
        <dbReference type="SAM" id="MobiDB-lite"/>
    </source>
</evidence>
<feature type="chain" id="PRO_0000161767" description="DNA ligase 1">
    <location>
        <begin position="1"/>
        <end position="735"/>
    </location>
</feature>
<feature type="domain" description="BRCT" evidence="1">
    <location>
        <begin position="643"/>
        <end position="732"/>
    </location>
</feature>
<feature type="region of interest" description="Disordered" evidence="2">
    <location>
        <begin position="1"/>
        <end position="23"/>
    </location>
</feature>
<feature type="compositionally biased region" description="Basic and acidic residues" evidence="2">
    <location>
        <begin position="1"/>
        <end position="11"/>
    </location>
</feature>
<feature type="active site" description="N6-AMP-lysine intermediate" evidence="1">
    <location>
        <position position="130"/>
    </location>
</feature>
<feature type="binding site" evidence="1">
    <location>
        <begin position="48"/>
        <end position="52"/>
    </location>
    <ligand>
        <name>NAD(+)</name>
        <dbReference type="ChEBI" id="CHEBI:57540"/>
    </ligand>
</feature>
<feature type="binding site" evidence="1">
    <location>
        <begin position="97"/>
        <end position="98"/>
    </location>
    <ligand>
        <name>NAD(+)</name>
        <dbReference type="ChEBI" id="CHEBI:57540"/>
    </ligand>
</feature>
<feature type="binding site" evidence="1">
    <location>
        <position position="128"/>
    </location>
    <ligand>
        <name>NAD(+)</name>
        <dbReference type="ChEBI" id="CHEBI:57540"/>
    </ligand>
</feature>
<feature type="binding site" evidence="1">
    <location>
        <position position="151"/>
    </location>
    <ligand>
        <name>NAD(+)</name>
        <dbReference type="ChEBI" id="CHEBI:57540"/>
    </ligand>
</feature>
<feature type="binding site" evidence="1">
    <location>
        <position position="188"/>
    </location>
    <ligand>
        <name>NAD(+)</name>
        <dbReference type="ChEBI" id="CHEBI:57540"/>
    </ligand>
</feature>
<feature type="binding site" evidence="1">
    <location>
        <position position="305"/>
    </location>
    <ligand>
        <name>NAD(+)</name>
        <dbReference type="ChEBI" id="CHEBI:57540"/>
    </ligand>
</feature>
<feature type="binding site" evidence="1">
    <location>
        <position position="329"/>
    </location>
    <ligand>
        <name>NAD(+)</name>
        <dbReference type="ChEBI" id="CHEBI:57540"/>
    </ligand>
</feature>
<feature type="binding site" evidence="1">
    <location>
        <position position="423"/>
    </location>
    <ligand>
        <name>Zn(2+)</name>
        <dbReference type="ChEBI" id="CHEBI:29105"/>
    </ligand>
</feature>
<feature type="binding site" evidence="1">
    <location>
        <position position="426"/>
    </location>
    <ligand>
        <name>Zn(2+)</name>
        <dbReference type="ChEBI" id="CHEBI:29105"/>
    </ligand>
</feature>
<feature type="binding site" evidence="1">
    <location>
        <position position="442"/>
    </location>
    <ligand>
        <name>Zn(2+)</name>
        <dbReference type="ChEBI" id="CHEBI:29105"/>
    </ligand>
</feature>
<feature type="binding site" evidence="1">
    <location>
        <position position="448"/>
    </location>
    <ligand>
        <name>Zn(2+)</name>
        <dbReference type="ChEBI" id="CHEBI:29105"/>
    </ligand>
</feature>
<protein>
    <recommendedName>
        <fullName evidence="1">DNA ligase 1</fullName>
        <ecNumber evidence="1">6.5.1.2</ecNumber>
    </recommendedName>
    <alternativeName>
        <fullName evidence="1">Polydeoxyribonucleotide synthase [NAD(+)] 1</fullName>
    </alternativeName>
</protein>
<sequence>MAGDKQGDKQAETTSVPAEARERHAQLAEQIEEHRFRYYVNDAPVVSDAEFDRLLRTLEELEERHPELRTPESPTQKVAGAYATEFTAVQHPTRMLSLDNTFNDDELAAWFERIARELGEQEYHFLCELKVDGLAVNLTYERGRLVRAATRGDGRTGEDITPNVRTIAEIPDRLAGDKVPDLVEIRGEVYFPMEKFQELNARLNEAGDKPFANARNAAAGSLRQKDPRVTASRPLHMVVHGIGTLEGYSGLTRLSQAYDLLKAWGLPTSPHNRVVDGLDGVREFIAYYGENRHSVAHEIDGVVVKVDEIRLQGRLGSTARAPRWAIAYKYAPEEVNTKLVDIKVGVGRTGRVTPYAQVEPVTVAGSEVEFATLHNQEVVKAKGVLIGDTVVLRKAGDVIPEILGPVADLRDGSEREFVMPAECPECGTPLKAMKEGDIDLRCPNARACPAQLRERVAYLAGRECLDIEHFGGVVAAALTGPLEPSEPPLVDEGDLFDLTVEKLLPIKAYVLDPDSGLPKRDPKTGEEKIATVFANKEGEPKKNTLALLQHIEEAKTRPLARFINGLSIRYVGPVAAQALAREFRSIDRIEQATEEELASTDGVGGAIATAVKEWFAVDWHREIVRKWKAAGVPLEDRSTGEDEGPRPLEGLTVVVTGTLENFTRDGAKEALQSRGAKVTGSVSKKTSFVVVGDNPGSKYDKAMQLKVPVLNEDGFAVLLEQGPEAAADVALSAEE</sequence>
<comment type="function">
    <text evidence="1">DNA ligase that catalyzes the formation of phosphodiester linkages between 5'-phosphoryl and 3'-hydroxyl groups in double-stranded DNA using NAD as a coenzyme and as the energy source for the reaction. It is essential for DNA replication and repair of damaged DNA.</text>
</comment>
<comment type="catalytic activity">
    <reaction evidence="1">
        <text>NAD(+) + (deoxyribonucleotide)n-3'-hydroxyl + 5'-phospho-(deoxyribonucleotide)m = (deoxyribonucleotide)n+m + AMP + beta-nicotinamide D-nucleotide.</text>
        <dbReference type="EC" id="6.5.1.2"/>
    </reaction>
</comment>
<comment type="cofactor">
    <cofactor evidence="1">
        <name>Mg(2+)</name>
        <dbReference type="ChEBI" id="CHEBI:18420"/>
    </cofactor>
    <cofactor evidence="1">
        <name>Mn(2+)</name>
        <dbReference type="ChEBI" id="CHEBI:29035"/>
    </cofactor>
</comment>
<comment type="similarity">
    <text evidence="1">Belongs to the NAD-dependent DNA ligase family. LigA subfamily.</text>
</comment>
<gene>
    <name evidence="1" type="primary">ligA1</name>
    <name type="ordered locus">SCO5494</name>
    <name type="ORF">SC8D9.06</name>
</gene>
<organism>
    <name type="scientific">Streptomyces coelicolor (strain ATCC BAA-471 / A3(2) / M145)</name>
    <dbReference type="NCBI Taxonomy" id="100226"/>
    <lineage>
        <taxon>Bacteria</taxon>
        <taxon>Bacillati</taxon>
        <taxon>Actinomycetota</taxon>
        <taxon>Actinomycetes</taxon>
        <taxon>Kitasatosporales</taxon>
        <taxon>Streptomycetaceae</taxon>
        <taxon>Streptomyces</taxon>
        <taxon>Streptomyces albidoflavus group</taxon>
    </lineage>
</organism>
<proteinExistence type="inferred from homology"/>
<keyword id="KW-0227">DNA damage</keyword>
<keyword id="KW-0234">DNA repair</keyword>
<keyword id="KW-0235">DNA replication</keyword>
<keyword id="KW-0436">Ligase</keyword>
<keyword id="KW-0460">Magnesium</keyword>
<keyword id="KW-0464">Manganese</keyword>
<keyword id="KW-0479">Metal-binding</keyword>
<keyword id="KW-0520">NAD</keyword>
<keyword id="KW-1185">Reference proteome</keyword>
<keyword id="KW-0862">Zinc</keyword>
<dbReference type="EC" id="6.5.1.2" evidence="1"/>
<dbReference type="EMBL" id="AL939123">
    <property type="protein sequence ID" value="CAB37570.1"/>
    <property type="molecule type" value="Genomic_DNA"/>
</dbReference>
<dbReference type="PIR" id="T35810">
    <property type="entry name" value="T35810"/>
</dbReference>
<dbReference type="RefSeq" id="NP_629629.1">
    <property type="nucleotide sequence ID" value="NC_003888.3"/>
</dbReference>
<dbReference type="SMR" id="Q9Z585"/>
<dbReference type="FunCoup" id="Q9Z585">
    <property type="interactions" value="55"/>
</dbReference>
<dbReference type="STRING" id="100226.gene:17763146"/>
<dbReference type="PaxDb" id="100226-SCO5494"/>
<dbReference type="KEGG" id="sco:SCO5494"/>
<dbReference type="PATRIC" id="fig|100226.15.peg.5578"/>
<dbReference type="eggNOG" id="COG0272">
    <property type="taxonomic scope" value="Bacteria"/>
</dbReference>
<dbReference type="HOGENOM" id="CLU_007764_2_1_11"/>
<dbReference type="InParanoid" id="Q9Z585"/>
<dbReference type="OrthoDB" id="9759736at2"/>
<dbReference type="PhylomeDB" id="Q9Z585"/>
<dbReference type="Proteomes" id="UP000001973">
    <property type="component" value="Chromosome"/>
</dbReference>
<dbReference type="GO" id="GO:0005829">
    <property type="term" value="C:cytosol"/>
    <property type="evidence" value="ECO:0000318"/>
    <property type="project" value="GO_Central"/>
</dbReference>
<dbReference type="GO" id="GO:0003911">
    <property type="term" value="F:DNA ligase (NAD+) activity"/>
    <property type="evidence" value="ECO:0000318"/>
    <property type="project" value="GO_Central"/>
</dbReference>
<dbReference type="GO" id="GO:0046872">
    <property type="term" value="F:metal ion binding"/>
    <property type="evidence" value="ECO:0007669"/>
    <property type="project" value="UniProtKB-KW"/>
</dbReference>
<dbReference type="GO" id="GO:0006281">
    <property type="term" value="P:DNA repair"/>
    <property type="evidence" value="ECO:0007669"/>
    <property type="project" value="UniProtKB-KW"/>
</dbReference>
<dbReference type="GO" id="GO:0006260">
    <property type="term" value="P:DNA replication"/>
    <property type="evidence" value="ECO:0007669"/>
    <property type="project" value="UniProtKB-KW"/>
</dbReference>
<dbReference type="CDD" id="cd00114">
    <property type="entry name" value="LIGANc"/>
    <property type="match status" value="1"/>
</dbReference>
<dbReference type="FunFam" id="1.10.150.20:FF:000006">
    <property type="entry name" value="DNA ligase"/>
    <property type="match status" value="1"/>
</dbReference>
<dbReference type="FunFam" id="1.10.287.610:FF:000002">
    <property type="entry name" value="DNA ligase"/>
    <property type="match status" value="1"/>
</dbReference>
<dbReference type="FunFam" id="2.40.50.140:FF:000012">
    <property type="entry name" value="DNA ligase"/>
    <property type="match status" value="1"/>
</dbReference>
<dbReference type="FunFam" id="3.30.470.30:FF:000001">
    <property type="entry name" value="DNA ligase"/>
    <property type="match status" value="1"/>
</dbReference>
<dbReference type="FunFam" id="3.40.50.10190:FF:000054">
    <property type="entry name" value="DNA ligase"/>
    <property type="match status" value="1"/>
</dbReference>
<dbReference type="Gene3D" id="6.20.10.30">
    <property type="match status" value="1"/>
</dbReference>
<dbReference type="Gene3D" id="1.10.150.20">
    <property type="entry name" value="5' to 3' exonuclease, C-terminal subdomain"/>
    <property type="match status" value="2"/>
</dbReference>
<dbReference type="Gene3D" id="3.40.50.10190">
    <property type="entry name" value="BRCT domain"/>
    <property type="match status" value="1"/>
</dbReference>
<dbReference type="Gene3D" id="3.30.470.30">
    <property type="entry name" value="DNA ligase/mRNA capping enzyme"/>
    <property type="match status" value="1"/>
</dbReference>
<dbReference type="Gene3D" id="1.10.287.610">
    <property type="entry name" value="Helix hairpin bin"/>
    <property type="match status" value="1"/>
</dbReference>
<dbReference type="Gene3D" id="2.40.50.140">
    <property type="entry name" value="Nucleic acid-binding proteins"/>
    <property type="match status" value="1"/>
</dbReference>
<dbReference type="HAMAP" id="MF_01588">
    <property type="entry name" value="DNA_ligase_A"/>
    <property type="match status" value="1"/>
</dbReference>
<dbReference type="InterPro" id="IPR001357">
    <property type="entry name" value="BRCT_dom"/>
</dbReference>
<dbReference type="InterPro" id="IPR036420">
    <property type="entry name" value="BRCT_dom_sf"/>
</dbReference>
<dbReference type="InterPro" id="IPR041663">
    <property type="entry name" value="DisA/LigA_HHH"/>
</dbReference>
<dbReference type="InterPro" id="IPR001679">
    <property type="entry name" value="DNA_ligase"/>
</dbReference>
<dbReference type="InterPro" id="IPR018239">
    <property type="entry name" value="DNA_ligase_AS"/>
</dbReference>
<dbReference type="InterPro" id="IPR033136">
    <property type="entry name" value="DNA_ligase_CS"/>
</dbReference>
<dbReference type="InterPro" id="IPR013839">
    <property type="entry name" value="DNAligase_adenylation"/>
</dbReference>
<dbReference type="InterPro" id="IPR013840">
    <property type="entry name" value="DNAligase_N"/>
</dbReference>
<dbReference type="InterPro" id="IPR012340">
    <property type="entry name" value="NA-bd_OB-fold"/>
</dbReference>
<dbReference type="InterPro" id="IPR004150">
    <property type="entry name" value="NAD_DNA_ligase_OB"/>
</dbReference>
<dbReference type="InterPro" id="IPR010994">
    <property type="entry name" value="RuvA_2-like"/>
</dbReference>
<dbReference type="InterPro" id="IPR004149">
    <property type="entry name" value="Znf_DNAligase_C4"/>
</dbReference>
<dbReference type="NCBIfam" id="TIGR00575">
    <property type="entry name" value="dnlj"/>
    <property type="match status" value="1"/>
</dbReference>
<dbReference type="NCBIfam" id="NF005932">
    <property type="entry name" value="PRK07956.1"/>
    <property type="match status" value="1"/>
</dbReference>
<dbReference type="PANTHER" id="PTHR23389">
    <property type="entry name" value="CHROMOSOME TRANSMISSION FIDELITY FACTOR 18"/>
    <property type="match status" value="1"/>
</dbReference>
<dbReference type="PANTHER" id="PTHR23389:SF9">
    <property type="entry name" value="DNA LIGASE"/>
    <property type="match status" value="1"/>
</dbReference>
<dbReference type="Pfam" id="PF00533">
    <property type="entry name" value="BRCT"/>
    <property type="match status" value="1"/>
</dbReference>
<dbReference type="Pfam" id="PF01653">
    <property type="entry name" value="DNA_ligase_aden"/>
    <property type="match status" value="1"/>
</dbReference>
<dbReference type="Pfam" id="PF03120">
    <property type="entry name" value="DNA_ligase_OB"/>
    <property type="match status" value="1"/>
</dbReference>
<dbReference type="Pfam" id="PF03119">
    <property type="entry name" value="DNA_ligase_ZBD"/>
    <property type="match status" value="1"/>
</dbReference>
<dbReference type="Pfam" id="PF12826">
    <property type="entry name" value="HHH_2"/>
    <property type="match status" value="1"/>
</dbReference>
<dbReference type="Pfam" id="PF22745">
    <property type="entry name" value="Nlig-Ia"/>
    <property type="match status" value="1"/>
</dbReference>
<dbReference type="PIRSF" id="PIRSF001604">
    <property type="entry name" value="LigA"/>
    <property type="match status" value="1"/>
</dbReference>
<dbReference type="SMART" id="SM00292">
    <property type="entry name" value="BRCT"/>
    <property type="match status" value="1"/>
</dbReference>
<dbReference type="SMART" id="SM00532">
    <property type="entry name" value="LIGANc"/>
    <property type="match status" value="1"/>
</dbReference>
<dbReference type="SUPFAM" id="SSF52113">
    <property type="entry name" value="BRCT domain"/>
    <property type="match status" value="1"/>
</dbReference>
<dbReference type="SUPFAM" id="SSF56091">
    <property type="entry name" value="DNA ligase/mRNA capping enzyme, catalytic domain"/>
    <property type="match status" value="1"/>
</dbReference>
<dbReference type="SUPFAM" id="SSF50249">
    <property type="entry name" value="Nucleic acid-binding proteins"/>
    <property type="match status" value="1"/>
</dbReference>
<dbReference type="SUPFAM" id="SSF47781">
    <property type="entry name" value="RuvA domain 2-like"/>
    <property type="match status" value="1"/>
</dbReference>
<dbReference type="PROSITE" id="PS50172">
    <property type="entry name" value="BRCT"/>
    <property type="match status" value="1"/>
</dbReference>
<dbReference type="PROSITE" id="PS01055">
    <property type="entry name" value="DNA_LIGASE_N1"/>
    <property type="match status" value="1"/>
</dbReference>
<dbReference type="PROSITE" id="PS01056">
    <property type="entry name" value="DNA_LIGASE_N2"/>
    <property type="match status" value="1"/>
</dbReference>
<accession>Q9Z585</accession>
<reference key="1">
    <citation type="journal article" date="2002" name="Nature">
        <title>Complete genome sequence of the model actinomycete Streptomyces coelicolor A3(2).</title>
        <authorList>
            <person name="Bentley S.D."/>
            <person name="Chater K.F."/>
            <person name="Cerdeno-Tarraga A.-M."/>
            <person name="Challis G.L."/>
            <person name="Thomson N.R."/>
            <person name="James K.D."/>
            <person name="Harris D.E."/>
            <person name="Quail M.A."/>
            <person name="Kieser H."/>
            <person name="Harper D."/>
            <person name="Bateman A."/>
            <person name="Brown S."/>
            <person name="Chandra G."/>
            <person name="Chen C.W."/>
            <person name="Collins M."/>
            <person name="Cronin A."/>
            <person name="Fraser A."/>
            <person name="Goble A."/>
            <person name="Hidalgo J."/>
            <person name="Hornsby T."/>
            <person name="Howarth S."/>
            <person name="Huang C.-H."/>
            <person name="Kieser T."/>
            <person name="Larke L."/>
            <person name="Murphy L.D."/>
            <person name="Oliver K."/>
            <person name="O'Neil S."/>
            <person name="Rabbinowitsch E."/>
            <person name="Rajandream M.A."/>
            <person name="Rutherford K.M."/>
            <person name="Rutter S."/>
            <person name="Seeger K."/>
            <person name="Saunders D."/>
            <person name="Sharp S."/>
            <person name="Squares R."/>
            <person name="Squares S."/>
            <person name="Taylor K."/>
            <person name="Warren T."/>
            <person name="Wietzorrek A."/>
            <person name="Woodward J.R."/>
            <person name="Barrell B.G."/>
            <person name="Parkhill J."/>
            <person name="Hopwood D.A."/>
        </authorList>
    </citation>
    <scope>NUCLEOTIDE SEQUENCE [LARGE SCALE GENOMIC DNA]</scope>
    <source>
        <strain>ATCC BAA-471 / A3(2) / M145</strain>
    </source>
</reference>